<keyword id="KW-0010">Activator</keyword>
<keyword id="KW-0963">Cytoplasm</keyword>
<keyword id="KW-0238">DNA-binding</keyword>
<keyword id="KW-0592">Phosphate transport</keyword>
<keyword id="KW-0597">Phosphoprotein</keyword>
<keyword id="KW-0804">Transcription</keyword>
<keyword id="KW-0805">Transcription regulation</keyword>
<keyword id="KW-0813">Transport</keyword>
<keyword id="KW-0902">Two-component regulatory system</keyword>
<evidence type="ECO:0000250" key="1"/>
<evidence type="ECO:0000255" key="2">
    <source>
        <dbReference type="PROSITE-ProRule" id="PRU00169"/>
    </source>
</evidence>
<evidence type="ECO:0000255" key="3">
    <source>
        <dbReference type="PROSITE-ProRule" id="PRU01091"/>
    </source>
</evidence>
<gene>
    <name type="primary">phoB</name>
</gene>
<sequence length="229" mass="26463">MARRILVVEDEAPIREMVCFVLEQNGFQPVEAEDYDSAVNQLNEPWPDLILLDWMLPGGSGIQFIKHLKRESMTRDIPVVMLTARGEEEDRVRGLETGADDYITKPFSPKELVARIKAVMRRISPMAVEEVIEMQGLSLDPTSHRVMTGEEPLEMGPTEFKLLHFFMTHPERVYSREQLLNHVWGTNVYVEDRTVDVHIRRLRKALEPGGHDRMVQTVRGTGYRFSTRF</sequence>
<comment type="function">
    <text>This protein is a positive regulator for the phosphate regulon. Transcription of this operon is positively regulated by PhoB and PhoR when phosphate is limited.</text>
</comment>
<comment type="subcellular location">
    <subcellularLocation>
        <location>Cytoplasm</location>
    </subcellularLocation>
</comment>
<comment type="PTM">
    <text evidence="1">Phosphorylated by PhoR.</text>
</comment>
<reference key="1">
    <citation type="journal article" date="1989" name="J. Bacteriol.">
        <title>Phosphate regulon in members of the family Enterobacteriaceae: comparison of the phoB-phoR operons of Escherichia coli, Shigella dysenteriae, and Klebsiella pneumoniae.</title>
        <authorList>
            <person name="Lee T.Y."/>
            <person name="Makino K."/>
            <person name="Shinagawa H."/>
            <person name="Amemura M."/>
            <person name="Nakata A."/>
        </authorList>
    </citation>
    <scope>NUCLEOTIDE SEQUENCE [GENOMIC DNA]</scope>
</reference>
<organism>
    <name type="scientific">Shigella dysenteriae</name>
    <dbReference type="NCBI Taxonomy" id="622"/>
    <lineage>
        <taxon>Bacteria</taxon>
        <taxon>Pseudomonadati</taxon>
        <taxon>Pseudomonadota</taxon>
        <taxon>Gammaproteobacteria</taxon>
        <taxon>Enterobacterales</taxon>
        <taxon>Enterobacteriaceae</taxon>
        <taxon>Shigella</taxon>
    </lineage>
</organism>
<feature type="chain" id="PRO_0000081192" description="Phosphate regulon transcriptional regulatory protein PhoB">
    <location>
        <begin position="1"/>
        <end position="229"/>
    </location>
</feature>
<feature type="domain" description="Response regulatory" evidence="2">
    <location>
        <begin position="4"/>
        <end position="120"/>
    </location>
</feature>
<feature type="DNA-binding region" description="OmpR/PhoB-type" evidence="3">
    <location>
        <begin position="129"/>
        <end position="227"/>
    </location>
</feature>
<feature type="modified residue" description="4-aspartylphosphate" evidence="2">
    <location>
        <position position="53"/>
    </location>
</feature>
<accession>P45606</accession>
<dbReference type="EMBL" id="M31793">
    <property type="protein sequence ID" value="AAA26535.1"/>
    <property type="molecule type" value="Genomic_DNA"/>
</dbReference>
<dbReference type="PIR" id="A44753">
    <property type="entry name" value="A44753"/>
</dbReference>
<dbReference type="RefSeq" id="WP_000113934.1">
    <property type="nucleotide sequence ID" value="NZ_UAUQ01000003.1"/>
</dbReference>
<dbReference type="BMRB" id="P45606"/>
<dbReference type="SMR" id="P45606"/>
<dbReference type="OMA" id="MDVDRHT"/>
<dbReference type="GO" id="GO:0005829">
    <property type="term" value="C:cytosol"/>
    <property type="evidence" value="ECO:0007669"/>
    <property type="project" value="TreeGrafter"/>
</dbReference>
<dbReference type="GO" id="GO:0032993">
    <property type="term" value="C:protein-DNA complex"/>
    <property type="evidence" value="ECO:0007669"/>
    <property type="project" value="TreeGrafter"/>
</dbReference>
<dbReference type="GO" id="GO:0000156">
    <property type="term" value="F:phosphorelay response regulator activity"/>
    <property type="evidence" value="ECO:0007669"/>
    <property type="project" value="InterPro"/>
</dbReference>
<dbReference type="GO" id="GO:0000976">
    <property type="term" value="F:transcription cis-regulatory region binding"/>
    <property type="evidence" value="ECO:0007669"/>
    <property type="project" value="TreeGrafter"/>
</dbReference>
<dbReference type="GO" id="GO:0006817">
    <property type="term" value="P:phosphate ion transport"/>
    <property type="evidence" value="ECO:0007669"/>
    <property type="project" value="UniProtKB-KW"/>
</dbReference>
<dbReference type="GO" id="GO:0006355">
    <property type="term" value="P:regulation of DNA-templated transcription"/>
    <property type="evidence" value="ECO:0007669"/>
    <property type="project" value="InterPro"/>
</dbReference>
<dbReference type="CDD" id="cd17618">
    <property type="entry name" value="REC_OmpR_PhoB"/>
    <property type="match status" value="1"/>
</dbReference>
<dbReference type="CDD" id="cd00383">
    <property type="entry name" value="trans_reg_C"/>
    <property type="match status" value="1"/>
</dbReference>
<dbReference type="FunFam" id="3.40.50.2300:FF:000001">
    <property type="entry name" value="DNA-binding response regulator PhoB"/>
    <property type="match status" value="1"/>
</dbReference>
<dbReference type="FunFam" id="1.10.10.10:FF:000011">
    <property type="entry name" value="Phosphate regulon transcriptional regulator PhoB"/>
    <property type="match status" value="1"/>
</dbReference>
<dbReference type="Gene3D" id="3.40.50.2300">
    <property type="match status" value="1"/>
</dbReference>
<dbReference type="Gene3D" id="6.10.250.690">
    <property type="match status" value="1"/>
</dbReference>
<dbReference type="Gene3D" id="1.10.10.10">
    <property type="entry name" value="Winged helix-like DNA-binding domain superfamily/Winged helix DNA-binding domain"/>
    <property type="match status" value="1"/>
</dbReference>
<dbReference type="InterPro" id="IPR011006">
    <property type="entry name" value="CheY-like_superfamily"/>
</dbReference>
<dbReference type="InterPro" id="IPR001867">
    <property type="entry name" value="OmpR/PhoB-type_DNA-bd"/>
</dbReference>
<dbReference type="InterPro" id="IPR011879">
    <property type="entry name" value="Sig_transdc_resp-reg_PhoB"/>
</dbReference>
<dbReference type="InterPro" id="IPR001789">
    <property type="entry name" value="Sig_transdc_resp-reg_receiver"/>
</dbReference>
<dbReference type="InterPro" id="IPR039420">
    <property type="entry name" value="WalR-like"/>
</dbReference>
<dbReference type="InterPro" id="IPR036388">
    <property type="entry name" value="WH-like_DNA-bd_sf"/>
</dbReference>
<dbReference type="NCBIfam" id="TIGR02154">
    <property type="entry name" value="PhoB"/>
    <property type="match status" value="1"/>
</dbReference>
<dbReference type="NCBIfam" id="NF007546">
    <property type="entry name" value="PRK10161.1"/>
    <property type="match status" value="1"/>
</dbReference>
<dbReference type="PANTHER" id="PTHR48111:SF40">
    <property type="entry name" value="PHOSPHATE REGULON TRANSCRIPTIONAL REGULATORY PROTEIN PHOB"/>
    <property type="match status" value="1"/>
</dbReference>
<dbReference type="PANTHER" id="PTHR48111">
    <property type="entry name" value="REGULATOR OF RPOS"/>
    <property type="match status" value="1"/>
</dbReference>
<dbReference type="Pfam" id="PF00072">
    <property type="entry name" value="Response_reg"/>
    <property type="match status" value="1"/>
</dbReference>
<dbReference type="Pfam" id="PF00486">
    <property type="entry name" value="Trans_reg_C"/>
    <property type="match status" value="1"/>
</dbReference>
<dbReference type="SMART" id="SM00448">
    <property type="entry name" value="REC"/>
    <property type="match status" value="1"/>
</dbReference>
<dbReference type="SMART" id="SM00862">
    <property type="entry name" value="Trans_reg_C"/>
    <property type="match status" value="1"/>
</dbReference>
<dbReference type="SUPFAM" id="SSF52172">
    <property type="entry name" value="CheY-like"/>
    <property type="match status" value="1"/>
</dbReference>
<dbReference type="PROSITE" id="PS51755">
    <property type="entry name" value="OMPR_PHOB"/>
    <property type="match status" value="1"/>
</dbReference>
<dbReference type="PROSITE" id="PS50110">
    <property type="entry name" value="RESPONSE_REGULATORY"/>
    <property type="match status" value="1"/>
</dbReference>
<protein>
    <recommendedName>
        <fullName>Phosphate regulon transcriptional regulatory protein PhoB</fullName>
    </recommendedName>
</protein>
<proteinExistence type="inferred from homology"/>
<name>PHOB_SHIDY</name>